<accession>B9M5T8</accession>
<organism>
    <name type="scientific">Geotalea daltonii (strain DSM 22248 / JCM 15807 / FRC-32)</name>
    <name type="common">Geobacter daltonii</name>
    <dbReference type="NCBI Taxonomy" id="316067"/>
    <lineage>
        <taxon>Bacteria</taxon>
        <taxon>Pseudomonadati</taxon>
        <taxon>Thermodesulfobacteriota</taxon>
        <taxon>Desulfuromonadia</taxon>
        <taxon>Geobacterales</taxon>
        <taxon>Geobacteraceae</taxon>
        <taxon>Geotalea</taxon>
    </lineage>
</organism>
<feature type="chain" id="PRO_1000149472" description="Methylenetetrahydrofolate--tRNA-(uracil-5-)-methyltransferase TrmFO">
    <location>
        <begin position="1"/>
        <end position="437"/>
    </location>
</feature>
<feature type="binding site" evidence="1">
    <location>
        <begin position="10"/>
        <end position="15"/>
    </location>
    <ligand>
        <name>FAD</name>
        <dbReference type="ChEBI" id="CHEBI:57692"/>
    </ligand>
</feature>
<dbReference type="EC" id="2.1.1.74" evidence="1"/>
<dbReference type="EMBL" id="CP001390">
    <property type="protein sequence ID" value="ACM19919.1"/>
    <property type="molecule type" value="Genomic_DNA"/>
</dbReference>
<dbReference type="RefSeq" id="WP_012646648.1">
    <property type="nucleotide sequence ID" value="NC_011979.1"/>
</dbReference>
<dbReference type="SMR" id="B9M5T8"/>
<dbReference type="STRING" id="316067.Geob_1561"/>
<dbReference type="KEGG" id="geo:Geob_1561"/>
<dbReference type="eggNOG" id="COG1206">
    <property type="taxonomic scope" value="Bacteria"/>
</dbReference>
<dbReference type="HOGENOM" id="CLU_033057_1_0_7"/>
<dbReference type="OrthoDB" id="9803114at2"/>
<dbReference type="Proteomes" id="UP000007721">
    <property type="component" value="Chromosome"/>
</dbReference>
<dbReference type="GO" id="GO:0005829">
    <property type="term" value="C:cytosol"/>
    <property type="evidence" value="ECO:0007669"/>
    <property type="project" value="TreeGrafter"/>
</dbReference>
<dbReference type="GO" id="GO:0050660">
    <property type="term" value="F:flavin adenine dinucleotide binding"/>
    <property type="evidence" value="ECO:0007669"/>
    <property type="project" value="UniProtKB-UniRule"/>
</dbReference>
<dbReference type="GO" id="GO:0047151">
    <property type="term" value="F:tRNA (uracil(54)-C5)-methyltransferase activity, 5,10-methylenetetrahydrofolate-dependent"/>
    <property type="evidence" value="ECO:0007669"/>
    <property type="project" value="UniProtKB-UniRule"/>
</dbReference>
<dbReference type="GO" id="GO:0030488">
    <property type="term" value="P:tRNA methylation"/>
    <property type="evidence" value="ECO:0007669"/>
    <property type="project" value="TreeGrafter"/>
</dbReference>
<dbReference type="GO" id="GO:0002098">
    <property type="term" value="P:tRNA wobble uridine modification"/>
    <property type="evidence" value="ECO:0007669"/>
    <property type="project" value="TreeGrafter"/>
</dbReference>
<dbReference type="Gene3D" id="3.50.50.60">
    <property type="entry name" value="FAD/NAD(P)-binding domain"/>
    <property type="match status" value="2"/>
</dbReference>
<dbReference type="HAMAP" id="MF_01037">
    <property type="entry name" value="TrmFO"/>
    <property type="match status" value="1"/>
</dbReference>
<dbReference type="InterPro" id="IPR036188">
    <property type="entry name" value="FAD/NAD-bd_sf"/>
</dbReference>
<dbReference type="InterPro" id="IPR002218">
    <property type="entry name" value="MnmG-rel"/>
</dbReference>
<dbReference type="InterPro" id="IPR020595">
    <property type="entry name" value="MnmG-rel_CS"/>
</dbReference>
<dbReference type="InterPro" id="IPR040131">
    <property type="entry name" value="MnmG_N"/>
</dbReference>
<dbReference type="InterPro" id="IPR004417">
    <property type="entry name" value="TrmFO"/>
</dbReference>
<dbReference type="NCBIfam" id="TIGR00137">
    <property type="entry name" value="gid_trmFO"/>
    <property type="match status" value="1"/>
</dbReference>
<dbReference type="NCBIfam" id="NF003739">
    <property type="entry name" value="PRK05335.1"/>
    <property type="match status" value="1"/>
</dbReference>
<dbReference type="PANTHER" id="PTHR11806">
    <property type="entry name" value="GLUCOSE INHIBITED DIVISION PROTEIN A"/>
    <property type="match status" value="1"/>
</dbReference>
<dbReference type="PANTHER" id="PTHR11806:SF2">
    <property type="entry name" value="METHYLENETETRAHYDROFOLATE--TRNA-(URACIL-5-)-METHYLTRANSFERASE TRMFO"/>
    <property type="match status" value="1"/>
</dbReference>
<dbReference type="Pfam" id="PF01134">
    <property type="entry name" value="GIDA"/>
    <property type="match status" value="1"/>
</dbReference>
<dbReference type="PRINTS" id="PR00411">
    <property type="entry name" value="PNDRDTASEI"/>
</dbReference>
<dbReference type="SUPFAM" id="SSF51905">
    <property type="entry name" value="FAD/NAD(P)-binding domain"/>
    <property type="match status" value="1"/>
</dbReference>
<dbReference type="PROSITE" id="PS01281">
    <property type="entry name" value="GIDA_2"/>
    <property type="match status" value="1"/>
</dbReference>
<protein>
    <recommendedName>
        <fullName evidence="1">Methylenetetrahydrofolate--tRNA-(uracil-5-)-methyltransferase TrmFO</fullName>
        <ecNumber evidence="1">2.1.1.74</ecNumber>
    </recommendedName>
    <alternativeName>
        <fullName evidence="1">Folate-dependent tRNA (uracil-5-)-methyltransferase</fullName>
    </alternativeName>
    <alternativeName>
        <fullName evidence="1">Folate-dependent tRNA(M-5-U54)-methyltransferase</fullName>
    </alternativeName>
</protein>
<gene>
    <name evidence="1" type="primary">trmFO</name>
    <name type="ordered locus">Geob_1561</name>
</gene>
<comment type="function">
    <text evidence="1">Catalyzes the folate-dependent formation of 5-methyl-uridine at position 54 (M-5-U54) in all tRNAs.</text>
</comment>
<comment type="catalytic activity">
    <reaction evidence="1">
        <text>uridine(54) in tRNA + (6R)-5,10-methylene-5,6,7,8-tetrahydrofolate + NADH + H(+) = 5-methyluridine(54) in tRNA + (6S)-5,6,7,8-tetrahydrofolate + NAD(+)</text>
        <dbReference type="Rhea" id="RHEA:16873"/>
        <dbReference type="Rhea" id="RHEA-COMP:10167"/>
        <dbReference type="Rhea" id="RHEA-COMP:10193"/>
        <dbReference type="ChEBI" id="CHEBI:15378"/>
        <dbReference type="ChEBI" id="CHEBI:15636"/>
        <dbReference type="ChEBI" id="CHEBI:57453"/>
        <dbReference type="ChEBI" id="CHEBI:57540"/>
        <dbReference type="ChEBI" id="CHEBI:57945"/>
        <dbReference type="ChEBI" id="CHEBI:65315"/>
        <dbReference type="ChEBI" id="CHEBI:74447"/>
        <dbReference type="EC" id="2.1.1.74"/>
    </reaction>
</comment>
<comment type="catalytic activity">
    <reaction evidence="1">
        <text>uridine(54) in tRNA + (6R)-5,10-methylene-5,6,7,8-tetrahydrofolate + NADPH + H(+) = 5-methyluridine(54) in tRNA + (6S)-5,6,7,8-tetrahydrofolate + NADP(+)</text>
        <dbReference type="Rhea" id="RHEA:62372"/>
        <dbReference type="Rhea" id="RHEA-COMP:10167"/>
        <dbReference type="Rhea" id="RHEA-COMP:10193"/>
        <dbReference type="ChEBI" id="CHEBI:15378"/>
        <dbReference type="ChEBI" id="CHEBI:15636"/>
        <dbReference type="ChEBI" id="CHEBI:57453"/>
        <dbReference type="ChEBI" id="CHEBI:57783"/>
        <dbReference type="ChEBI" id="CHEBI:58349"/>
        <dbReference type="ChEBI" id="CHEBI:65315"/>
        <dbReference type="ChEBI" id="CHEBI:74447"/>
        <dbReference type="EC" id="2.1.1.74"/>
    </reaction>
</comment>
<comment type="cofactor">
    <cofactor evidence="1">
        <name>FAD</name>
        <dbReference type="ChEBI" id="CHEBI:57692"/>
    </cofactor>
</comment>
<comment type="subcellular location">
    <subcellularLocation>
        <location evidence="1">Cytoplasm</location>
    </subcellularLocation>
</comment>
<comment type="similarity">
    <text evidence="1">Belongs to the MnmG family. TrmFO subfamily.</text>
</comment>
<sequence length="437" mass="47378">MNNNKIKIIGGGLAGCEAAWQAAERGVAVKLHEMKPERYSPAHHLPGLAELVCSNSLRGESLDNAVGLLKEELKRSGSLFIAAALATRVPAGGALAVDRQLFSDYITEKITNHPLIEVVYGEVAQIPEEGIVIVASGPLTSDRLAASIATHTGNYLYFYDAIAPIVTADSIDFGKAFRASRYGKGDGDDYLNCPMDETTYKAFVAALLGGDKVAAKDFEKVVHFEGCMPIEEMAERGPETLRFGPMKPVGLPDPRTGVEPYAVVQLRQENRDGTLFNLVGFQTKLTYSEQKRIFSLIPGLEHADFVRLGSMHRNTFINAPQLLLPTFQLKNTPRILFAGQITGVEGYVESAGSGFMAGINVARLAKGGALTVPPPTTALGALVHHITSVDTKHFQPMNVNYGLFPELGGKVKKKDKRARLAERALTDLTEWQGMVQD</sequence>
<reference key="1">
    <citation type="submission" date="2009-01" db="EMBL/GenBank/DDBJ databases">
        <title>Complete sequence of Geobacter sp. FRC-32.</title>
        <authorList>
            <consortium name="US DOE Joint Genome Institute"/>
            <person name="Lucas S."/>
            <person name="Copeland A."/>
            <person name="Lapidus A."/>
            <person name="Glavina del Rio T."/>
            <person name="Dalin E."/>
            <person name="Tice H."/>
            <person name="Bruce D."/>
            <person name="Goodwin L."/>
            <person name="Pitluck S."/>
            <person name="Saunders E."/>
            <person name="Brettin T."/>
            <person name="Detter J.C."/>
            <person name="Han C."/>
            <person name="Larimer F."/>
            <person name="Land M."/>
            <person name="Hauser L."/>
            <person name="Kyrpides N."/>
            <person name="Ovchinnikova G."/>
            <person name="Kostka J."/>
            <person name="Richardson P."/>
        </authorList>
    </citation>
    <scope>NUCLEOTIDE SEQUENCE [LARGE SCALE GENOMIC DNA]</scope>
    <source>
        <strain>DSM 22248 / JCM 15807 / FRC-32</strain>
    </source>
</reference>
<keyword id="KW-0963">Cytoplasm</keyword>
<keyword id="KW-0274">FAD</keyword>
<keyword id="KW-0285">Flavoprotein</keyword>
<keyword id="KW-0489">Methyltransferase</keyword>
<keyword id="KW-0520">NAD</keyword>
<keyword id="KW-0521">NADP</keyword>
<keyword id="KW-1185">Reference proteome</keyword>
<keyword id="KW-0808">Transferase</keyword>
<keyword id="KW-0819">tRNA processing</keyword>
<evidence type="ECO:0000255" key="1">
    <source>
        <dbReference type="HAMAP-Rule" id="MF_01037"/>
    </source>
</evidence>
<name>TRMFO_GEODF</name>
<proteinExistence type="inferred from homology"/>